<feature type="chain" id="PRO_0000349295" description="Putative anti-sigma factor antagonist BtrV">
    <location>
        <begin position="1"/>
        <end position="116"/>
    </location>
</feature>
<feature type="domain" description="STAS" evidence="2">
    <location>
        <begin position="1"/>
        <end position="110"/>
    </location>
</feature>
<feature type="modified residue" description="Phosphoserine; by BtrW" evidence="3">
    <location>
        <position position="55"/>
    </location>
</feature>
<feature type="mutagenesis site" description="Absence of BtrW-catalyzed phosphorylation; binds BtrW 2.5-fold more than wild-type." evidence="3">
    <original>S</original>
    <variation>A</variation>
    <variation>D</variation>
    <location>
        <position position="55"/>
    </location>
</feature>
<feature type="mutagenesis site" description="Absence of BtrW-catalyzed phosphorylation; binds BtrW 2-fold more than wild-type." evidence="3">
    <original>S</original>
    <variation>D</variation>
    <location>
        <position position="55"/>
    </location>
</feature>
<keyword id="KW-0903">Direct protein sequencing</keyword>
<keyword id="KW-0597">Phosphoprotein</keyword>
<evidence type="ECO:0000250" key="1"/>
<evidence type="ECO:0000255" key="2">
    <source>
        <dbReference type="PROSITE-ProRule" id="PRU00198"/>
    </source>
</evidence>
<evidence type="ECO:0000269" key="3">
    <source>
    </source>
</evidence>
<evidence type="ECO:0000305" key="4"/>
<dbReference type="EMBL" id="BX640442">
    <property type="protein sequence ID" value="CAE32143.1"/>
    <property type="molecule type" value="Genomic_DNA"/>
</dbReference>
<dbReference type="RefSeq" id="WP_003809935.1">
    <property type="nucleotide sequence ID" value="NC_002927.3"/>
</dbReference>
<dbReference type="SMR" id="Q7WLU9"/>
<dbReference type="iPTMnet" id="Q7WLU9"/>
<dbReference type="KEGG" id="bbr:BB1646"/>
<dbReference type="eggNOG" id="COG1366">
    <property type="taxonomic scope" value="Bacteria"/>
</dbReference>
<dbReference type="HOGENOM" id="CLU_115403_9_2_4"/>
<dbReference type="Proteomes" id="UP000001027">
    <property type="component" value="Chromosome"/>
</dbReference>
<dbReference type="GO" id="GO:0043856">
    <property type="term" value="F:anti-sigma factor antagonist activity"/>
    <property type="evidence" value="ECO:0007669"/>
    <property type="project" value="InterPro"/>
</dbReference>
<dbReference type="CDD" id="cd07043">
    <property type="entry name" value="STAS_anti-anti-sigma_factors"/>
    <property type="match status" value="1"/>
</dbReference>
<dbReference type="Gene3D" id="3.30.750.24">
    <property type="entry name" value="STAS domain"/>
    <property type="match status" value="1"/>
</dbReference>
<dbReference type="InterPro" id="IPR003658">
    <property type="entry name" value="Anti-sigma_ant"/>
</dbReference>
<dbReference type="InterPro" id="IPR002645">
    <property type="entry name" value="STAS_dom"/>
</dbReference>
<dbReference type="InterPro" id="IPR036513">
    <property type="entry name" value="STAS_dom_sf"/>
</dbReference>
<dbReference type="NCBIfam" id="TIGR00377">
    <property type="entry name" value="ant_ant_sig"/>
    <property type="match status" value="1"/>
</dbReference>
<dbReference type="PANTHER" id="PTHR33495:SF2">
    <property type="entry name" value="ANTI-SIGMA FACTOR ANTAGONIST TM_1081-RELATED"/>
    <property type="match status" value="1"/>
</dbReference>
<dbReference type="PANTHER" id="PTHR33495">
    <property type="entry name" value="ANTI-SIGMA FACTOR ANTAGONIST TM_1081-RELATED-RELATED"/>
    <property type="match status" value="1"/>
</dbReference>
<dbReference type="Pfam" id="PF01740">
    <property type="entry name" value="STAS"/>
    <property type="match status" value="1"/>
</dbReference>
<dbReference type="SUPFAM" id="SSF52091">
    <property type="entry name" value="SpoIIaa-like"/>
    <property type="match status" value="1"/>
</dbReference>
<dbReference type="PROSITE" id="PS50801">
    <property type="entry name" value="STAS"/>
    <property type="match status" value="1"/>
</dbReference>
<proteinExistence type="evidence at protein level"/>
<organism>
    <name type="scientific">Bordetella bronchiseptica (strain ATCC BAA-588 / NCTC 13252 / RB50)</name>
    <name type="common">Alcaligenes bronchisepticus</name>
    <dbReference type="NCBI Taxonomy" id="257310"/>
    <lineage>
        <taxon>Bacteria</taxon>
        <taxon>Pseudomonadati</taxon>
        <taxon>Pseudomonadota</taxon>
        <taxon>Betaproteobacteria</taxon>
        <taxon>Burkholderiales</taxon>
        <taxon>Alcaligenaceae</taxon>
        <taxon>Bordetella</taxon>
    </lineage>
</organism>
<sequence length="116" mass="12634">MKLTMDKIDGMLIACLQGVVNSANAEQLEAELAAQVDKGERRVVLDLGRLDYISSAGLRVVLLVAKQLRQVQGELVLCELKPHVREVFEISGFLSIFPVANSREAAAAAFKTALPR</sequence>
<name>BTRV_BORBR</name>
<reference key="1">
    <citation type="journal article" date="2003" name="Nat. Genet.">
        <title>Comparative analysis of the genome sequences of Bordetella pertussis, Bordetella parapertussis and Bordetella bronchiseptica.</title>
        <authorList>
            <person name="Parkhill J."/>
            <person name="Sebaihia M."/>
            <person name="Preston A."/>
            <person name="Murphy L.D."/>
            <person name="Thomson N.R."/>
            <person name="Harris D.E."/>
            <person name="Holden M.T.G."/>
            <person name="Churcher C.M."/>
            <person name="Bentley S.D."/>
            <person name="Mungall K.L."/>
            <person name="Cerdeno-Tarraga A.-M."/>
            <person name="Temple L."/>
            <person name="James K.D."/>
            <person name="Harris B."/>
            <person name="Quail M.A."/>
            <person name="Achtman M."/>
            <person name="Atkin R."/>
            <person name="Baker S."/>
            <person name="Basham D."/>
            <person name="Bason N."/>
            <person name="Cherevach I."/>
            <person name="Chillingworth T."/>
            <person name="Collins M."/>
            <person name="Cronin A."/>
            <person name="Davis P."/>
            <person name="Doggett J."/>
            <person name="Feltwell T."/>
            <person name="Goble A."/>
            <person name="Hamlin N."/>
            <person name="Hauser H."/>
            <person name="Holroyd S."/>
            <person name="Jagels K."/>
            <person name="Leather S."/>
            <person name="Moule S."/>
            <person name="Norberczak H."/>
            <person name="O'Neil S."/>
            <person name="Ormond D."/>
            <person name="Price C."/>
            <person name="Rabbinowitsch E."/>
            <person name="Rutter S."/>
            <person name="Sanders M."/>
            <person name="Saunders D."/>
            <person name="Seeger K."/>
            <person name="Sharp S."/>
            <person name="Simmonds M."/>
            <person name="Skelton J."/>
            <person name="Squares R."/>
            <person name="Squares S."/>
            <person name="Stevens K."/>
            <person name="Unwin L."/>
            <person name="Whitehead S."/>
            <person name="Barrell B.G."/>
            <person name="Maskell D.J."/>
        </authorList>
    </citation>
    <scope>NUCLEOTIDE SEQUENCE [LARGE SCALE GENOMIC DNA]</scope>
    <source>
        <strain>ATCC BAA-588 / NCTC 13252 / RB50</strain>
    </source>
</reference>
<reference key="2">
    <citation type="journal article" date="2005" name="J. Bacteriol.">
        <title>Interactions between partner switcher orthologs BtrW and BtrV regulate type III secretion in Bordetella.</title>
        <authorList>
            <person name="Kozak N.A."/>
            <person name="Mattoo S."/>
            <person name="Foreman-Wykert A.K."/>
            <person name="Whitelegge J.P."/>
            <person name="Miller J.F."/>
        </authorList>
    </citation>
    <scope>PROTEIN SEQUENCE OF 55-59</scope>
    <scope>INTERACTION</scope>
    <scope>PHOSPHORYLATION AT SER-55</scope>
    <scope>MUTAGENESIS OF SER-55</scope>
    <scope>IDENTIFICATION BY MASS SPECTROMETRY</scope>
    <source>
        <strain>ATCC BAA-588 / NCTC 13252 / RB50</strain>
    </source>
</reference>
<gene>
    <name type="primary">btrV</name>
    <name type="ordered locus">BB1646</name>
</gene>
<protein>
    <recommendedName>
        <fullName>Putative anti-sigma factor antagonist BtrV</fullName>
    </recommendedName>
</protein>
<accession>Q7WLU9</accession>
<comment type="function">
    <text evidence="1">Possible positive regulator of sigma-B activity (By similarity). Non-phosphorylated BtrV binds to BtrW, preventing its association with an unknown partner(s) that might be sigma-B. When phosphorylated, releases BtrW, which is then free to complex with and inactivate its partner. Involved in type III secretion system (T3SS).</text>
</comment>
<comment type="subunit">
    <text evidence="3">Interacts with BtrW.</text>
</comment>
<comment type="PTM">
    <text evidence="3">Phosphorylated by BtrW. Dephosphorylated by BtrU.</text>
</comment>
<comment type="miscellaneous">
    <text>Type III secreted proteins Bsp22 and BopD accumulate intracellularly instead of being secreted in cells expressing the mutagenized BtrV.</text>
</comment>
<comment type="similarity">
    <text evidence="4">Belongs to the anti-sigma-factor antagonist family.</text>
</comment>